<evidence type="ECO:0000255" key="1">
    <source>
        <dbReference type="HAMAP-Rule" id="MF_01014"/>
    </source>
</evidence>
<organism>
    <name type="scientific">Roseobacter denitrificans (strain ATCC 33942 / OCh 114)</name>
    <name type="common">Erythrobacter sp. (strain OCh 114)</name>
    <name type="synonym">Roseobacter denitrificans</name>
    <dbReference type="NCBI Taxonomy" id="375451"/>
    <lineage>
        <taxon>Bacteria</taxon>
        <taxon>Pseudomonadati</taxon>
        <taxon>Pseudomonadota</taxon>
        <taxon>Alphaproteobacteria</taxon>
        <taxon>Rhodobacterales</taxon>
        <taxon>Roseobacteraceae</taxon>
        <taxon>Roseobacter</taxon>
    </lineage>
</organism>
<sequence>MILYPAIDLKDGQAVRLVHGDMDRTTVFNDDPAAQARSFVAAGCTWLHLVDLNGAFAGEPVNAAPVEAILKACPVPAQLGGGIRDMATIERWLNKGLARVILGTVAVENPDLVREAARAFPDQVAVGIDARNGFVATKGWAEETDVQATDLAKSFEDAGVAAIIYTDILRDGAMGGPNTQATADLARAVSIPVIASGGVSSLDDLLALRDSGVISGAISGRALYDGAIDLAQALEALKT</sequence>
<keyword id="KW-0028">Amino-acid biosynthesis</keyword>
<keyword id="KW-0963">Cytoplasm</keyword>
<keyword id="KW-0368">Histidine biosynthesis</keyword>
<keyword id="KW-0413">Isomerase</keyword>
<keyword id="KW-1185">Reference proteome</keyword>
<gene>
    <name evidence="1" type="primary">hisA</name>
    <name type="ordered locus">RD1_3560</name>
</gene>
<feature type="chain" id="PRO_0000290528" description="1-(5-phosphoribosyl)-5-[(5-phosphoribosylamino)methylideneamino] imidazole-4-carboxamide isomerase">
    <location>
        <begin position="1"/>
        <end position="239"/>
    </location>
</feature>
<feature type="active site" description="Proton acceptor" evidence="1">
    <location>
        <position position="8"/>
    </location>
</feature>
<feature type="active site" description="Proton donor" evidence="1">
    <location>
        <position position="129"/>
    </location>
</feature>
<protein>
    <recommendedName>
        <fullName evidence="1">1-(5-phosphoribosyl)-5-[(5-phosphoribosylamino)methylideneamino] imidazole-4-carboxamide isomerase</fullName>
        <ecNumber evidence="1">5.3.1.16</ecNumber>
    </recommendedName>
    <alternativeName>
        <fullName evidence="1">Phosphoribosylformimino-5-aminoimidazole carboxamide ribotide isomerase</fullName>
    </alternativeName>
</protein>
<proteinExistence type="inferred from homology"/>
<reference key="1">
    <citation type="journal article" date="2007" name="J. Bacteriol.">
        <title>The complete genome sequence of Roseobacter denitrificans reveals a mixotrophic rather than photosynthetic metabolism.</title>
        <authorList>
            <person name="Swingley W.D."/>
            <person name="Sadekar S."/>
            <person name="Mastrian S.D."/>
            <person name="Matthies H.J."/>
            <person name="Hao J."/>
            <person name="Ramos H."/>
            <person name="Acharya C.R."/>
            <person name="Conrad A.L."/>
            <person name="Taylor H.L."/>
            <person name="Dejesa L.C."/>
            <person name="Shah M.K."/>
            <person name="O'Huallachain M.E."/>
            <person name="Lince M.T."/>
            <person name="Blankenship R.E."/>
            <person name="Beatty J.T."/>
            <person name="Touchman J.W."/>
        </authorList>
    </citation>
    <scope>NUCLEOTIDE SEQUENCE [LARGE SCALE GENOMIC DNA]</scope>
    <source>
        <strain>ATCC 33942 / OCh 114</strain>
    </source>
</reference>
<name>HIS4_ROSDO</name>
<dbReference type="EC" id="5.3.1.16" evidence="1"/>
<dbReference type="EMBL" id="CP000362">
    <property type="protein sequence ID" value="ABG33041.1"/>
    <property type="molecule type" value="Genomic_DNA"/>
</dbReference>
<dbReference type="RefSeq" id="WP_011569654.1">
    <property type="nucleotide sequence ID" value="NC_008209.1"/>
</dbReference>
<dbReference type="SMR" id="Q162Q2"/>
<dbReference type="STRING" id="375451.RD1_3560"/>
<dbReference type="KEGG" id="rde:RD1_3560"/>
<dbReference type="eggNOG" id="COG0106">
    <property type="taxonomic scope" value="Bacteria"/>
</dbReference>
<dbReference type="HOGENOM" id="CLU_048577_1_1_5"/>
<dbReference type="OrthoDB" id="9807749at2"/>
<dbReference type="UniPathway" id="UPA00031">
    <property type="reaction ID" value="UER00009"/>
</dbReference>
<dbReference type="Proteomes" id="UP000007029">
    <property type="component" value="Chromosome"/>
</dbReference>
<dbReference type="GO" id="GO:0005737">
    <property type="term" value="C:cytoplasm"/>
    <property type="evidence" value="ECO:0007669"/>
    <property type="project" value="UniProtKB-SubCell"/>
</dbReference>
<dbReference type="GO" id="GO:0003949">
    <property type="term" value="F:1-(5-phosphoribosyl)-5-[(5-phosphoribosylamino)methylideneamino]imidazole-4-carboxamide isomerase activity"/>
    <property type="evidence" value="ECO:0007669"/>
    <property type="project" value="UniProtKB-UniRule"/>
</dbReference>
<dbReference type="GO" id="GO:0000105">
    <property type="term" value="P:L-histidine biosynthetic process"/>
    <property type="evidence" value="ECO:0007669"/>
    <property type="project" value="UniProtKB-UniRule"/>
</dbReference>
<dbReference type="GO" id="GO:0000162">
    <property type="term" value="P:L-tryptophan biosynthetic process"/>
    <property type="evidence" value="ECO:0007669"/>
    <property type="project" value="TreeGrafter"/>
</dbReference>
<dbReference type="CDD" id="cd04732">
    <property type="entry name" value="HisA"/>
    <property type="match status" value="1"/>
</dbReference>
<dbReference type="FunFam" id="3.20.20.70:FF:000009">
    <property type="entry name" value="1-(5-phosphoribosyl)-5-[(5-phosphoribosylamino)methylideneamino] imidazole-4-carboxamide isomerase"/>
    <property type="match status" value="1"/>
</dbReference>
<dbReference type="Gene3D" id="3.20.20.70">
    <property type="entry name" value="Aldolase class I"/>
    <property type="match status" value="1"/>
</dbReference>
<dbReference type="HAMAP" id="MF_01014">
    <property type="entry name" value="HisA"/>
    <property type="match status" value="1"/>
</dbReference>
<dbReference type="InterPro" id="IPR013785">
    <property type="entry name" value="Aldolase_TIM"/>
</dbReference>
<dbReference type="InterPro" id="IPR006062">
    <property type="entry name" value="His_biosynth"/>
</dbReference>
<dbReference type="InterPro" id="IPR006063">
    <property type="entry name" value="HisA_bact_arch"/>
</dbReference>
<dbReference type="InterPro" id="IPR044524">
    <property type="entry name" value="Isoase_HisA-like"/>
</dbReference>
<dbReference type="InterPro" id="IPR023016">
    <property type="entry name" value="Isoase_HisA-like_bact"/>
</dbReference>
<dbReference type="InterPro" id="IPR011060">
    <property type="entry name" value="RibuloseP-bd_barrel"/>
</dbReference>
<dbReference type="NCBIfam" id="TIGR00007">
    <property type="entry name" value="1-(5-phosphoribosyl)-5-[(5-phosphoribosylamino)methylideneamino]imidazole-4-carboxamide isomerase"/>
    <property type="match status" value="1"/>
</dbReference>
<dbReference type="NCBIfam" id="NF010112">
    <property type="entry name" value="PRK13585.1"/>
    <property type="match status" value="1"/>
</dbReference>
<dbReference type="PANTHER" id="PTHR43090">
    <property type="entry name" value="1-(5-PHOSPHORIBOSYL)-5-[(5-PHOSPHORIBOSYLAMINO)METHYLIDENEAMINO] IMIDAZOLE-4-CARBOXAMIDE ISOMERASE"/>
    <property type="match status" value="1"/>
</dbReference>
<dbReference type="PANTHER" id="PTHR43090:SF2">
    <property type="entry name" value="1-(5-PHOSPHORIBOSYL)-5-[(5-PHOSPHORIBOSYLAMINO)METHYLIDENEAMINO] IMIDAZOLE-4-CARBOXAMIDE ISOMERASE"/>
    <property type="match status" value="1"/>
</dbReference>
<dbReference type="Pfam" id="PF00977">
    <property type="entry name" value="His_biosynth"/>
    <property type="match status" value="1"/>
</dbReference>
<dbReference type="SUPFAM" id="SSF51366">
    <property type="entry name" value="Ribulose-phoshate binding barrel"/>
    <property type="match status" value="1"/>
</dbReference>
<comment type="catalytic activity">
    <reaction evidence="1">
        <text>1-(5-phospho-beta-D-ribosyl)-5-[(5-phospho-beta-D-ribosylamino)methylideneamino]imidazole-4-carboxamide = 5-[(5-phospho-1-deoxy-D-ribulos-1-ylimino)methylamino]-1-(5-phospho-beta-D-ribosyl)imidazole-4-carboxamide</text>
        <dbReference type="Rhea" id="RHEA:15469"/>
        <dbReference type="ChEBI" id="CHEBI:58435"/>
        <dbReference type="ChEBI" id="CHEBI:58525"/>
        <dbReference type="EC" id="5.3.1.16"/>
    </reaction>
</comment>
<comment type="pathway">
    <text evidence="1">Amino-acid biosynthesis; L-histidine biosynthesis; L-histidine from 5-phospho-alpha-D-ribose 1-diphosphate: step 4/9.</text>
</comment>
<comment type="subcellular location">
    <subcellularLocation>
        <location evidence="1">Cytoplasm</location>
    </subcellularLocation>
</comment>
<comment type="similarity">
    <text evidence="1">Belongs to the HisA/HisF family.</text>
</comment>
<accession>Q162Q2</accession>